<name>RS11_MYCA9</name>
<accession>B1MGA1</accession>
<proteinExistence type="inferred from homology"/>
<dbReference type="EMBL" id="CU458896">
    <property type="protein sequence ID" value="CAM63846.1"/>
    <property type="molecule type" value="Genomic_DNA"/>
</dbReference>
<dbReference type="RefSeq" id="WP_005055956.1">
    <property type="nucleotide sequence ID" value="NZ_MLCG01000001.1"/>
</dbReference>
<dbReference type="SMR" id="B1MGA1"/>
<dbReference type="GeneID" id="93380711"/>
<dbReference type="KEGG" id="mab:MAB_3772c"/>
<dbReference type="Proteomes" id="UP000007137">
    <property type="component" value="Chromosome"/>
</dbReference>
<dbReference type="GO" id="GO:1990904">
    <property type="term" value="C:ribonucleoprotein complex"/>
    <property type="evidence" value="ECO:0007669"/>
    <property type="project" value="UniProtKB-KW"/>
</dbReference>
<dbReference type="GO" id="GO:0005840">
    <property type="term" value="C:ribosome"/>
    <property type="evidence" value="ECO:0007669"/>
    <property type="project" value="UniProtKB-KW"/>
</dbReference>
<dbReference type="GO" id="GO:0019843">
    <property type="term" value="F:rRNA binding"/>
    <property type="evidence" value="ECO:0007669"/>
    <property type="project" value="UniProtKB-UniRule"/>
</dbReference>
<dbReference type="GO" id="GO:0003735">
    <property type="term" value="F:structural constituent of ribosome"/>
    <property type="evidence" value="ECO:0007669"/>
    <property type="project" value="InterPro"/>
</dbReference>
<dbReference type="GO" id="GO:0006412">
    <property type="term" value="P:translation"/>
    <property type="evidence" value="ECO:0007669"/>
    <property type="project" value="UniProtKB-UniRule"/>
</dbReference>
<dbReference type="FunFam" id="3.30.420.80:FF:000001">
    <property type="entry name" value="30S ribosomal protein S11"/>
    <property type="match status" value="1"/>
</dbReference>
<dbReference type="Gene3D" id="3.30.420.80">
    <property type="entry name" value="Ribosomal protein S11"/>
    <property type="match status" value="1"/>
</dbReference>
<dbReference type="HAMAP" id="MF_01310">
    <property type="entry name" value="Ribosomal_uS11"/>
    <property type="match status" value="1"/>
</dbReference>
<dbReference type="InterPro" id="IPR001971">
    <property type="entry name" value="Ribosomal_uS11"/>
</dbReference>
<dbReference type="InterPro" id="IPR019981">
    <property type="entry name" value="Ribosomal_uS11_bac-type"/>
</dbReference>
<dbReference type="InterPro" id="IPR018102">
    <property type="entry name" value="Ribosomal_uS11_CS"/>
</dbReference>
<dbReference type="InterPro" id="IPR036967">
    <property type="entry name" value="Ribosomal_uS11_sf"/>
</dbReference>
<dbReference type="NCBIfam" id="NF003698">
    <property type="entry name" value="PRK05309.1"/>
    <property type="match status" value="1"/>
</dbReference>
<dbReference type="NCBIfam" id="TIGR03632">
    <property type="entry name" value="uS11_bact"/>
    <property type="match status" value="1"/>
</dbReference>
<dbReference type="PANTHER" id="PTHR11759">
    <property type="entry name" value="40S RIBOSOMAL PROTEIN S14/30S RIBOSOMAL PROTEIN S11"/>
    <property type="match status" value="1"/>
</dbReference>
<dbReference type="Pfam" id="PF00411">
    <property type="entry name" value="Ribosomal_S11"/>
    <property type="match status" value="1"/>
</dbReference>
<dbReference type="PIRSF" id="PIRSF002131">
    <property type="entry name" value="Ribosomal_S11"/>
    <property type="match status" value="1"/>
</dbReference>
<dbReference type="SUPFAM" id="SSF53137">
    <property type="entry name" value="Translational machinery components"/>
    <property type="match status" value="1"/>
</dbReference>
<dbReference type="PROSITE" id="PS00054">
    <property type="entry name" value="RIBOSOMAL_S11"/>
    <property type="match status" value="1"/>
</dbReference>
<organism>
    <name type="scientific">Mycobacteroides abscessus (strain ATCC 19977 / DSM 44196 / CCUG 20993 / CIP 104536 / JCM 13569 / NCTC 13031 / TMC 1543 / L948)</name>
    <name type="common">Mycobacterium abscessus</name>
    <dbReference type="NCBI Taxonomy" id="561007"/>
    <lineage>
        <taxon>Bacteria</taxon>
        <taxon>Bacillati</taxon>
        <taxon>Actinomycetota</taxon>
        <taxon>Actinomycetes</taxon>
        <taxon>Mycobacteriales</taxon>
        <taxon>Mycobacteriaceae</taxon>
        <taxon>Mycobacteroides</taxon>
        <taxon>Mycobacteroides abscessus</taxon>
    </lineage>
</organism>
<sequence length="138" mass="14632">MAPKKPGAAGPKKAQKTRRREKKNVPHGAAHIKSTFNNTIVSITDPQGNVISWASSGHVGFKGSRKSTPFAAQLAAENAARKAQEHGVKKVDVFVKGPGSGRETAIRSLQAAGLEVGAISDVTPQPHNGCRPPKRRRV</sequence>
<reference key="1">
    <citation type="journal article" date="2009" name="PLoS ONE">
        <title>Non mycobacterial virulence genes in the genome of the emerging pathogen Mycobacterium abscessus.</title>
        <authorList>
            <person name="Ripoll F."/>
            <person name="Pasek S."/>
            <person name="Schenowitz C."/>
            <person name="Dossat C."/>
            <person name="Barbe V."/>
            <person name="Rottman M."/>
            <person name="Macheras E."/>
            <person name="Heym B."/>
            <person name="Herrmann J.L."/>
            <person name="Daffe M."/>
            <person name="Brosch R."/>
            <person name="Risler J.L."/>
            <person name="Gaillard J.L."/>
        </authorList>
    </citation>
    <scope>NUCLEOTIDE SEQUENCE [LARGE SCALE GENOMIC DNA]</scope>
    <source>
        <strain>ATCC 19977 / DSM 44196 / CCUG 20993 / CIP 104536 / JCM 13569 / NCTC 13031 / TMC 1543 / L948</strain>
    </source>
</reference>
<feature type="chain" id="PRO_1000141113" description="Small ribosomal subunit protein uS11">
    <location>
        <begin position="1"/>
        <end position="138"/>
    </location>
</feature>
<feature type="region of interest" description="Disordered" evidence="2">
    <location>
        <begin position="1"/>
        <end position="27"/>
    </location>
</feature>
<feature type="region of interest" description="Disordered" evidence="2">
    <location>
        <begin position="119"/>
        <end position="138"/>
    </location>
</feature>
<feature type="compositionally biased region" description="Low complexity" evidence="2">
    <location>
        <begin position="1"/>
        <end position="12"/>
    </location>
</feature>
<feature type="compositionally biased region" description="Basic residues" evidence="2">
    <location>
        <begin position="13"/>
        <end position="22"/>
    </location>
</feature>
<protein>
    <recommendedName>
        <fullName evidence="1">Small ribosomal subunit protein uS11</fullName>
    </recommendedName>
    <alternativeName>
        <fullName evidence="3">30S ribosomal protein S11</fullName>
    </alternativeName>
</protein>
<comment type="function">
    <text evidence="1">Located on the platform of the 30S subunit, it bridges several disparate RNA helices of the 16S rRNA. Forms part of the Shine-Dalgarno cleft in the 70S ribosome.</text>
</comment>
<comment type="subunit">
    <text evidence="1">Part of the 30S ribosomal subunit. Interacts with proteins S7 and S18. Binds to IF-3.</text>
</comment>
<comment type="similarity">
    <text evidence="1">Belongs to the universal ribosomal protein uS11 family.</text>
</comment>
<evidence type="ECO:0000255" key="1">
    <source>
        <dbReference type="HAMAP-Rule" id="MF_01310"/>
    </source>
</evidence>
<evidence type="ECO:0000256" key="2">
    <source>
        <dbReference type="SAM" id="MobiDB-lite"/>
    </source>
</evidence>
<evidence type="ECO:0000305" key="3"/>
<gene>
    <name evidence="1" type="primary">rpsK</name>
    <name type="ordered locus">MAB_3772c</name>
</gene>
<keyword id="KW-1185">Reference proteome</keyword>
<keyword id="KW-0687">Ribonucleoprotein</keyword>
<keyword id="KW-0689">Ribosomal protein</keyword>
<keyword id="KW-0694">RNA-binding</keyword>
<keyword id="KW-0699">rRNA-binding</keyword>